<sequence length="272" mass="29492">METYAVFGNPIAHSKSPFIHQQFAQQLNIEHPYGRVLAPINDFINTLNTFFSAGGKGANVTVPFKEEAFARADELTERAALAGAVNTLKRLEDGRLLGDNTDGIGLLSDLERLSFIRPGLRILLIGAGGASRGVLLPLLSLDRAVTITNRTVSRAEELTKLFAHTGSIQALGMDELEGHEFDLIINATSSGISGDIPAIPSSLIHPGIYCYDMFYQKGKTPFLAWCEQRGSKRNADGLGMLVAQAAHAFLLWHGVLPDVEPVIKLLQQELSA</sequence>
<proteinExistence type="inferred from homology"/>
<gene>
    <name evidence="1" type="primary">aroE</name>
    <name type="ordered locus">ECED1_3945</name>
</gene>
<reference key="1">
    <citation type="journal article" date="2009" name="PLoS Genet.">
        <title>Organised genome dynamics in the Escherichia coli species results in highly diverse adaptive paths.</title>
        <authorList>
            <person name="Touchon M."/>
            <person name="Hoede C."/>
            <person name="Tenaillon O."/>
            <person name="Barbe V."/>
            <person name="Baeriswyl S."/>
            <person name="Bidet P."/>
            <person name="Bingen E."/>
            <person name="Bonacorsi S."/>
            <person name="Bouchier C."/>
            <person name="Bouvet O."/>
            <person name="Calteau A."/>
            <person name="Chiapello H."/>
            <person name="Clermont O."/>
            <person name="Cruveiller S."/>
            <person name="Danchin A."/>
            <person name="Diard M."/>
            <person name="Dossat C."/>
            <person name="Karoui M.E."/>
            <person name="Frapy E."/>
            <person name="Garry L."/>
            <person name="Ghigo J.M."/>
            <person name="Gilles A.M."/>
            <person name="Johnson J."/>
            <person name="Le Bouguenec C."/>
            <person name="Lescat M."/>
            <person name="Mangenot S."/>
            <person name="Martinez-Jehanne V."/>
            <person name="Matic I."/>
            <person name="Nassif X."/>
            <person name="Oztas S."/>
            <person name="Petit M.A."/>
            <person name="Pichon C."/>
            <person name="Rouy Z."/>
            <person name="Ruf C.S."/>
            <person name="Schneider D."/>
            <person name="Tourret J."/>
            <person name="Vacherie B."/>
            <person name="Vallenet D."/>
            <person name="Medigue C."/>
            <person name="Rocha E.P.C."/>
            <person name="Denamur E."/>
        </authorList>
    </citation>
    <scope>NUCLEOTIDE SEQUENCE [LARGE SCALE GENOMIC DNA]</scope>
    <source>
        <strain>ED1a</strain>
    </source>
</reference>
<accession>B7N0S2</accession>
<name>AROE_ECO81</name>
<organism>
    <name type="scientific">Escherichia coli O81 (strain ED1a)</name>
    <dbReference type="NCBI Taxonomy" id="585397"/>
    <lineage>
        <taxon>Bacteria</taxon>
        <taxon>Pseudomonadati</taxon>
        <taxon>Pseudomonadota</taxon>
        <taxon>Gammaproteobacteria</taxon>
        <taxon>Enterobacterales</taxon>
        <taxon>Enterobacteriaceae</taxon>
        <taxon>Escherichia</taxon>
    </lineage>
</organism>
<dbReference type="EC" id="1.1.1.25" evidence="1"/>
<dbReference type="EMBL" id="CU928162">
    <property type="protein sequence ID" value="CAR09940.1"/>
    <property type="molecule type" value="Genomic_DNA"/>
</dbReference>
<dbReference type="RefSeq" id="WP_000451247.1">
    <property type="nucleotide sequence ID" value="NC_011745.1"/>
</dbReference>
<dbReference type="SMR" id="B7N0S2"/>
<dbReference type="KEGG" id="ecq:ECED1_3945"/>
<dbReference type="HOGENOM" id="CLU_044063_2_1_6"/>
<dbReference type="UniPathway" id="UPA00053">
    <property type="reaction ID" value="UER00087"/>
</dbReference>
<dbReference type="Proteomes" id="UP000000748">
    <property type="component" value="Chromosome"/>
</dbReference>
<dbReference type="GO" id="GO:0005829">
    <property type="term" value="C:cytosol"/>
    <property type="evidence" value="ECO:0007669"/>
    <property type="project" value="TreeGrafter"/>
</dbReference>
<dbReference type="GO" id="GO:0050661">
    <property type="term" value="F:NADP binding"/>
    <property type="evidence" value="ECO:0007669"/>
    <property type="project" value="InterPro"/>
</dbReference>
<dbReference type="GO" id="GO:0004764">
    <property type="term" value="F:shikimate 3-dehydrogenase (NADP+) activity"/>
    <property type="evidence" value="ECO:0007669"/>
    <property type="project" value="UniProtKB-UniRule"/>
</dbReference>
<dbReference type="GO" id="GO:0008652">
    <property type="term" value="P:amino acid biosynthetic process"/>
    <property type="evidence" value="ECO:0007669"/>
    <property type="project" value="UniProtKB-KW"/>
</dbReference>
<dbReference type="GO" id="GO:0009073">
    <property type="term" value="P:aromatic amino acid family biosynthetic process"/>
    <property type="evidence" value="ECO:0007669"/>
    <property type="project" value="UniProtKB-KW"/>
</dbReference>
<dbReference type="GO" id="GO:0009423">
    <property type="term" value="P:chorismate biosynthetic process"/>
    <property type="evidence" value="ECO:0007669"/>
    <property type="project" value="UniProtKB-UniRule"/>
</dbReference>
<dbReference type="GO" id="GO:0019632">
    <property type="term" value="P:shikimate metabolic process"/>
    <property type="evidence" value="ECO:0007669"/>
    <property type="project" value="InterPro"/>
</dbReference>
<dbReference type="CDD" id="cd01065">
    <property type="entry name" value="NAD_bind_Shikimate_DH"/>
    <property type="match status" value="1"/>
</dbReference>
<dbReference type="FunFam" id="3.40.50.10860:FF:000006">
    <property type="entry name" value="Shikimate dehydrogenase (NADP(+))"/>
    <property type="match status" value="1"/>
</dbReference>
<dbReference type="FunFam" id="3.40.50.720:FF:000104">
    <property type="entry name" value="Shikimate dehydrogenase (NADP(+))"/>
    <property type="match status" value="1"/>
</dbReference>
<dbReference type="Gene3D" id="3.40.50.10860">
    <property type="entry name" value="Leucine Dehydrogenase, chain A, domain 1"/>
    <property type="match status" value="1"/>
</dbReference>
<dbReference type="Gene3D" id="3.40.50.720">
    <property type="entry name" value="NAD(P)-binding Rossmann-like Domain"/>
    <property type="match status" value="1"/>
</dbReference>
<dbReference type="HAMAP" id="MF_00222">
    <property type="entry name" value="Shikimate_DH_AroE"/>
    <property type="match status" value="1"/>
</dbReference>
<dbReference type="InterPro" id="IPR046346">
    <property type="entry name" value="Aminoacid_DH-like_N_sf"/>
</dbReference>
<dbReference type="InterPro" id="IPR036291">
    <property type="entry name" value="NAD(P)-bd_dom_sf"/>
</dbReference>
<dbReference type="InterPro" id="IPR041121">
    <property type="entry name" value="SDH_C"/>
</dbReference>
<dbReference type="InterPro" id="IPR011342">
    <property type="entry name" value="Shikimate_DH"/>
</dbReference>
<dbReference type="InterPro" id="IPR013708">
    <property type="entry name" value="Shikimate_DH-bd_N"/>
</dbReference>
<dbReference type="InterPro" id="IPR022893">
    <property type="entry name" value="Shikimate_DH_fam"/>
</dbReference>
<dbReference type="InterPro" id="IPR006151">
    <property type="entry name" value="Shikm_DH/Glu-tRNA_Rdtase"/>
</dbReference>
<dbReference type="NCBIfam" id="TIGR00507">
    <property type="entry name" value="aroE"/>
    <property type="match status" value="1"/>
</dbReference>
<dbReference type="NCBIfam" id="NF001310">
    <property type="entry name" value="PRK00258.1-2"/>
    <property type="match status" value="1"/>
</dbReference>
<dbReference type="PANTHER" id="PTHR21089:SF1">
    <property type="entry name" value="BIFUNCTIONAL 3-DEHYDROQUINATE DEHYDRATASE_SHIKIMATE DEHYDROGENASE, CHLOROPLASTIC"/>
    <property type="match status" value="1"/>
</dbReference>
<dbReference type="PANTHER" id="PTHR21089">
    <property type="entry name" value="SHIKIMATE DEHYDROGENASE"/>
    <property type="match status" value="1"/>
</dbReference>
<dbReference type="Pfam" id="PF18317">
    <property type="entry name" value="SDH_C"/>
    <property type="match status" value="1"/>
</dbReference>
<dbReference type="Pfam" id="PF01488">
    <property type="entry name" value="Shikimate_DH"/>
    <property type="match status" value="1"/>
</dbReference>
<dbReference type="Pfam" id="PF08501">
    <property type="entry name" value="Shikimate_dh_N"/>
    <property type="match status" value="1"/>
</dbReference>
<dbReference type="SUPFAM" id="SSF53223">
    <property type="entry name" value="Aminoacid dehydrogenase-like, N-terminal domain"/>
    <property type="match status" value="1"/>
</dbReference>
<dbReference type="SUPFAM" id="SSF51735">
    <property type="entry name" value="NAD(P)-binding Rossmann-fold domains"/>
    <property type="match status" value="1"/>
</dbReference>
<comment type="function">
    <text evidence="1">Involved in the biosynthesis of the chorismate, which leads to the biosynthesis of aromatic amino acids. Catalyzes the reversible NADPH linked reduction of 3-dehydroshikimate (DHSA) to yield shikimate (SA).</text>
</comment>
<comment type="catalytic activity">
    <reaction evidence="1">
        <text>shikimate + NADP(+) = 3-dehydroshikimate + NADPH + H(+)</text>
        <dbReference type="Rhea" id="RHEA:17737"/>
        <dbReference type="ChEBI" id="CHEBI:15378"/>
        <dbReference type="ChEBI" id="CHEBI:16630"/>
        <dbReference type="ChEBI" id="CHEBI:36208"/>
        <dbReference type="ChEBI" id="CHEBI:57783"/>
        <dbReference type="ChEBI" id="CHEBI:58349"/>
        <dbReference type="EC" id="1.1.1.25"/>
    </reaction>
</comment>
<comment type="pathway">
    <text evidence="1">Metabolic intermediate biosynthesis; chorismate biosynthesis; chorismate from D-erythrose 4-phosphate and phosphoenolpyruvate: step 4/7.</text>
</comment>
<comment type="subunit">
    <text evidence="1">Homodimer.</text>
</comment>
<comment type="similarity">
    <text evidence="1">Belongs to the shikimate dehydrogenase family.</text>
</comment>
<feature type="chain" id="PRO_1000124885" description="Shikimate dehydrogenase (NADP(+))">
    <location>
        <begin position="1"/>
        <end position="272"/>
    </location>
</feature>
<feature type="active site" description="Proton acceptor" evidence="1">
    <location>
        <position position="65"/>
    </location>
</feature>
<feature type="binding site" evidence="1">
    <location>
        <begin position="14"/>
        <end position="16"/>
    </location>
    <ligand>
        <name>shikimate</name>
        <dbReference type="ChEBI" id="CHEBI:36208"/>
    </ligand>
</feature>
<feature type="binding site" evidence="1">
    <location>
        <position position="61"/>
    </location>
    <ligand>
        <name>shikimate</name>
        <dbReference type="ChEBI" id="CHEBI:36208"/>
    </ligand>
</feature>
<feature type="binding site" evidence="1">
    <location>
        <position position="77"/>
    </location>
    <ligand>
        <name>NADP(+)</name>
        <dbReference type="ChEBI" id="CHEBI:58349"/>
    </ligand>
</feature>
<feature type="binding site" evidence="1">
    <location>
        <position position="86"/>
    </location>
    <ligand>
        <name>shikimate</name>
        <dbReference type="ChEBI" id="CHEBI:36208"/>
    </ligand>
</feature>
<feature type="binding site" evidence="1">
    <location>
        <position position="102"/>
    </location>
    <ligand>
        <name>shikimate</name>
        <dbReference type="ChEBI" id="CHEBI:36208"/>
    </ligand>
</feature>
<feature type="binding site" evidence="1">
    <location>
        <begin position="126"/>
        <end position="130"/>
    </location>
    <ligand>
        <name>NADP(+)</name>
        <dbReference type="ChEBI" id="CHEBI:58349"/>
    </ligand>
</feature>
<feature type="binding site" evidence="1">
    <location>
        <begin position="149"/>
        <end position="154"/>
    </location>
    <ligand>
        <name>NADP(+)</name>
        <dbReference type="ChEBI" id="CHEBI:58349"/>
    </ligand>
</feature>
<feature type="binding site" evidence="1">
    <location>
        <position position="213"/>
    </location>
    <ligand>
        <name>NADP(+)</name>
        <dbReference type="ChEBI" id="CHEBI:58349"/>
    </ligand>
</feature>
<feature type="binding site" evidence="1">
    <location>
        <position position="215"/>
    </location>
    <ligand>
        <name>shikimate</name>
        <dbReference type="ChEBI" id="CHEBI:36208"/>
    </ligand>
</feature>
<feature type="binding site" evidence="1">
    <location>
        <position position="237"/>
    </location>
    <ligand>
        <name>NADP(+)</name>
        <dbReference type="ChEBI" id="CHEBI:58349"/>
    </ligand>
</feature>
<evidence type="ECO:0000255" key="1">
    <source>
        <dbReference type="HAMAP-Rule" id="MF_00222"/>
    </source>
</evidence>
<protein>
    <recommendedName>
        <fullName evidence="1">Shikimate dehydrogenase (NADP(+))</fullName>
        <shortName evidence="1">SDH</shortName>
        <ecNumber evidence="1">1.1.1.25</ecNumber>
    </recommendedName>
</protein>
<keyword id="KW-0028">Amino-acid biosynthesis</keyword>
<keyword id="KW-0057">Aromatic amino acid biosynthesis</keyword>
<keyword id="KW-0521">NADP</keyword>
<keyword id="KW-0560">Oxidoreductase</keyword>